<gene>
    <name type="primary">CHD6</name>
    <name type="synonym">CHD5</name>
    <name type="synonym">KIAA1335</name>
    <name type="synonym">RIGB</name>
</gene>
<reference key="1">
    <citation type="journal article" date="2002" name="Mamm. Genome">
        <title>CHD5 defines a new subfamily of chromodomain-SWI2/SNF2-like helicases.</title>
        <authorList>
            <person name="Schuster E.F."/>
            <person name="Stoeger R.J."/>
        </authorList>
    </citation>
    <scope>NUCLEOTIDE SEQUENCE [MRNA] (ISOFORM 1)</scope>
</reference>
<reference key="2">
    <citation type="journal article" date="2001" name="Nature">
        <title>The DNA sequence and comparative analysis of human chromosome 20.</title>
        <authorList>
            <person name="Deloukas P."/>
            <person name="Matthews L.H."/>
            <person name="Ashurst J.L."/>
            <person name="Burton J."/>
            <person name="Gilbert J.G.R."/>
            <person name="Jones M."/>
            <person name="Stavrides G."/>
            <person name="Almeida J.P."/>
            <person name="Babbage A.K."/>
            <person name="Bagguley C.L."/>
            <person name="Bailey J."/>
            <person name="Barlow K.F."/>
            <person name="Bates K.N."/>
            <person name="Beard L.M."/>
            <person name="Beare D.M."/>
            <person name="Beasley O.P."/>
            <person name="Bird C.P."/>
            <person name="Blakey S.E."/>
            <person name="Bridgeman A.M."/>
            <person name="Brown A.J."/>
            <person name="Buck D."/>
            <person name="Burrill W.D."/>
            <person name="Butler A.P."/>
            <person name="Carder C."/>
            <person name="Carter N.P."/>
            <person name="Chapman J.C."/>
            <person name="Clamp M."/>
            <person name="Clark G."/>
            <person name="Clark L.N."/>
            <person name="Clark S.Y."/>
            <person name="Clee C.M."/>
            <person name="Clegg S."/>
            <person name="Cobley V.E."/>
            <person name="Collier R.E."/>
            <person name="Connor R.E."/>
            <person name="Corby N.R."/>
            <person name="Coulson A."/>
            <person name="Coville G.J."/>
            <person name="Deadman R."/>
            <person name="Dhami P.D."/>
            <person name="Dunn M."/>
            <person name="Ellington A.G."/>
            <person name="Frankland J.A."/>
            <person name="Fraser A."/>
            <person name="French L."/>
            <person name="Garner P."/>
            <person name="Grafham D.V."/>
            <person name="Griffiths C."/>
            <person name="Griffiths M.N.D."/>
            <person name="Gwilliam R."/>
            <person name="Hall R.E."/>
            <person name="Hammond S."/>
            <person name="Harley J.L."/>
            <person name="Heath P.D."/>
            <person name="Ho S."/>
            <person name="Holden J.L."/>
            <person name="Howden P.J."/>
            <person name="Huckle E."/>
            <person name="Hunt A.R."/>
            <person name="Hunt S.E."/>
            <person name="Jekosch K."/>
            <person name="Johnson C.M."/>
            <person name="Johnson D."/>
            <person name="Kay M.P."/>
            <person name="Kimberley A.M."/>
            <person name="King A."/>
            <person name="Knights A."/>
            <person name="Laird G.K."/>
            <person name="Lawlor S."/>
            <person name="Lehvaeslaiho M.H."/>
            <person name="Leversha M.A."/>
            <person name="Lloyd C."/>
            <person name="Lloyd D.M."/>
            <person name="Lovell J.D."/>
            <person name="Marsh V.L."/>
            <person name="Martin S.L."/>
            <person name="McConnachie L.J."/>
            <person name="McLay K."/>
            <person name="McMurray A.A."/>
            <person name="Milne S.A."/>
            <person name="Mistry D."/>
            <person name="Moore M.J.F."/>
            <person name="Mullikin J.C."/>
            <person name="Nickerson T."/>
            <person name="Oliver K."/>
            <person name="Parker A."/>
            <person name="Patel R."/>
            <person name="Pearce T.A.V."/>
            <person name="Peck A.I."/>
            <person name="Phillimore B.J.C.T."/>
            <person name="Prathalingam S.R."/>
            <person name="Plumb R.W."/>
            <person name="Ramsay H."/>
            <person name="Rice C.M."/>
            <person name="Ross M.T."/>
            <person name="Scott C.E."/>
            <person name="Sehra H.K."/>
            <person name="Shownkeen R."/>
            <person name="Sims S."/>
            <person name="Skuce C.D."/>
            <person name="Smith M.L."/>
            <person name="Soderlund C."/>
            <person name="Steward C.A."/>
            <person name="Sulston J.E."/>
            <person name="Swann R.M."/>
            <person name="Sycamore N."/>
            <person name="Taylor R."/>
            <person name="Tee L."/>
            <person name="Thomas D.W."/>
            <person name="Thorpe A."/>
            <person name="Tracey A."/>
            <person name="Tromans A.C."/>
            <person name="Vaudin M."/>
            <person name="Wall M."/>
            <person name="Wallis J.M."/>
            <person name="Whitehead S.L."/>
            <person name="Whittaker P."/>
            <person name="Willey D.L."/>
            <person name="Williams L."/>
            <person name="Williams S.A."/>
            <person name="Wilming L."/>
            <person name="Wray P.W."/>
            <person name="Hubbard T."/>
            <person name="Durbin R.M."/>
            <person name="Bentley D.R."/>
            <person name="Beck S."/>
            <person name="Rogers J."/>
        </authorList>
    </citation>
    <scope>NUCLEOTIDE SEQUENCE [LARGE SCALE GENOMIC DNA]</scope>
</reference>
<reference key="3">
    <citation type="journal article" date="2004" name="Genome Res.">
        <title>The status, quality, and expansion of the NIH full-length cDNA project: the Mammalian Gene Collection (MGC).</title>
        <authorList>
            <consortium name="The MGC Project Team"/>
        </authorList>
    </citation>
    <scope>NUCLEOTIDE SEQUENCE [LARGE SCALE MRNA] (ISOFORM 2)</scope>
    <scope>NUCLEOTIDE SEQUENCE [LARGE SCALE MRNA] OF 2442-2715 (ISOFORM 1)</scope>
    <source>
        <tissue>Hippocampus</tissue>
        <tissue>Lymph</tissue>
        <tissue>Retinoblastoma</tissue>
    </source>
</reference>
<reference key="4">
    <citation type="journal article" date="2002" name="Zhonghua Fang She Yi Xue Yu Fang Hu Za Zhi">
        <title>cDNA cloning and transcriptional controlling of a novel radiation-induced gene and its function analysis.</title>
        <authorList>
            <person name="Zhou P.-K."/>
            <person name="Sui J.-L."/>
        </authorList>
    </citation>
    <scope>NUCLEOTIDE SEQUENCE [MRNA] OF 299-2715 (ISOFORM 3)</scope>
</reference>
<reference key="5">
    <citation type="journal article" date="2000" name="DNA Res.">
        <title>Prediction of the coding sequences of unidentified human genes. XVI. The complete sequences of 150 new cDNA clones from brain which code for large proteins in vitro.</title>
        <authorList>
            <person name="Nagase T."/>
            <person name="Kikuno R."/>
            <person name="Ishikawa K."/>
            <person name="Hirosawa M."/>
            <person name="Ohara O."/>
        </authorList>
    </citation>
    <scope>NUCLEOTIDE SEQUENCE [LARGE SCALE MRNA] OF 675-2715 (ISOFORM 1)</scope>
    <source>
        <tissue>Brain</tissue>
    </source>
</reference>
<reference key="6">
    <citation type="journal article" date="2002" name="DNA Res.">
        <title>Construction of expression-ready cDNA clones for KIAA genes: manual curation of 330 KIAA cDNA clones.</title>
        <authorList>
            <person name="Nakajima D."/>
            <person name="Okazaki N."/>
            <person name="Yamakawa H."/>
            <person name="Kikuno R."/>
            <person name="Ohara O."/>
            <person name="Nagase T."/>
        </authorList>
    </citation>
    <scope>SEQUENCE REVISION</scope>
</reference>
<reference key="7">
    <citation type="journal article" date="2004" name="Nat. Genet.">
        <title>Complete sequencing and characterization of 21,243 full-length human cDNAs.</title>
        <authorList>
            <person name="Ota T."/>
            <person name="Suzuki Y."/>
            <person name="Nishikawa T."/>
            <person name="Otsuki T."/>
            <person name="Sugiyama T."/>
            <person name="Irie R."/>
            <person name="Wakamatsu A."/>
            <person name="Hayashi K."/>
            <person name="Sato H."/>
            <person name="Nagai K."/>
            <person name="Kimura K."/>
            <person name="Makita H."/>
            <person name="Sekine M."/>
            <person name="Obayashi M."/>
            <person name="Nishi T."/>
            <person name="Shibahara T."/>
            <person name="Tanaka T."/>
            <person name="Ishii S."/>
            <person name="Yamamoto J."/>
            <person name="Saito K."/>
            <person name="Kawai Y."/>
            <person name="Isono Y."/>
            <person name="Nakamura Y."/>
            <person name="Nagahari K."/>
            <person name="Murakami K."/>
            <person name="Yasuda T."/>
            <person name="Iwayanagi T."/>
            <person name="Wagatsuma M."/>
            <person name="Shiratori A."/>
            <person name="Sudo H."/>
            <person name="Hosoiri T."/>
            <person name="Kaku Y."/>
            <person name="Kodaira H."/>
            <person name="Kondo H."/>
            <person name="Sugawara M."/>
            <person name="Takahashi M."/>
            <person name="Kanda K."/>
            <person name="Yokoi T."/>
            <person name="Furuya T."/>
            <person name="Kikkawa E."/>
            <person name="Omura Y."/>
            <person name="Abe K."/>
            <person name="Kamihara K."/>
            <person name="Katsuta N."/>
            <person name="Sato K."/>
            <person name="Tanikawa M."/>
            <person name="Yamazaki M."/>
            <person name="Ninomiya K."/>
            <person name="Ishibashi T."/>
            <person name="Yamashita H."/>
            <person name="Murakawa K."/>
            <person name="Fujimori K."/>
            <person name="Tanai H."/>
            <person name="Kimata M."/>
            <person name="Watanabe M."/>
            <person name="Hiraoka S."/>
            <person name="Chiba Y."/>
            <person name="Ishida S."/>
            <person name="Ono Y."/>
            <person name="Takiguchi S."/>
            <person name="Watanabe S."/>
            <person name="Yosida M."/>
            <person name="Hotuta T."/>
            <person name="Kusano J."/>
            <person name="Kanehori K."/>
            <person name="Takahashi-Fujii A."/>
            <person name="Hara H."/>
            <person name="Tanase T.-O."/>
            <person name="Nomura Y."/>
            <person name="Togiya S."/>
            <person name="Komai F."/>
            <person name="Hara R."/>
            <person name="Takeuchi K."/>
            <person name="Arita M."/>
            <person name="Imose N."/>
            <person name="Musashino K."/>
            <person name="Yuuki H."/>
            <person name="Oshima A."/>
            <person name="Sasaki N."/>
            <person name="Aotsuka S."/>
            <person name="Yoshikawa Y."/>
            <person name="Matsunawa H."/>
            <person name="Ichihara T."/>
            <person name="Shiohata N."/>
            <person name="Sano S."/>
            <person name="Moriya S."/>
            <person name="Momiyama H."/>
            <person name="Satoh N."/>
            <person name="Takami S."/>
            <person name="Terashima Y."/>
            <person name="Suzuki O."/>
            <person name="Nakagawa S."/>
            <person name="Senoh A."/>
            <person name="Mizoguchi H."/>
            <person name="Goto Y."/>
            <person name="Shimizu F."/>
            <person name="Wakebe H."/>
            <person name="Hishigaki H."/>
            <person name="Watanabe T."/>
            <person name="Sugiyama A."/>
            <person name="Takemoto M."/>
            <person name="Kawakami B."/>
            <person name="Yamazaki M."/>
            <person name="Watanabe K."/>
            <person name="Kumagai A."/>
            <person name="Itakura S."/>
            <person name="Fukuzumi Y."/>
            <person name="Fujimori Y."/>
            <person name="Komiyama M."/>
            <person name="Tashiro H."/>
            <person name="Tanigami A."/>
            <person name="Fujiwara T."/>
            <person name="Ono T."/>
            <person name="Yamada K."/>
            <person name="Fujii Y."/>
            <person name="Ozaki K."/>
            <person name="Hirao M."/>
            <person name="Ohmori Y."/>
            <person name="Kawabata A."/>
            <person name="Hikiji T."/>
            <person name="Kobatake N."/>
            <person name="Inagaki H."/>
            <person name="Ikema Y."/>
            <person name="Okamoto S."/>
            <person name="Okitani R."/>
            <person name="Kawakami T."/>
            <person name="Noguchi S."/>
            <person name="Itoh T."/>
            <person name="Shigeta K."/>
            <person name="Senba T."/>
            <person name="Matsumura K."/>
            <person name="Nakajima Y."/>
            <person name="Mizuno T."/>
            <person name="Morinaga M."/>
            <person name="Sasaki M."/>
            <person name="Togashi T."/>
            <person name="Oyama M."/>
            <person name="Hata H."/>
            <person name="Watanabe M."/>
            <person name="Komatsu T."/>
            <person name="Mizushima-Sugano J."/>
            <person name="Satoh T."/>
            <person name="Shirai Y."/>
            <person name="Takahashi Y."/>
            <person name="Nakagawa K."/>
            <person name="Okumura K."/>
            <person name="Nagase T."/>
            <person name="Nomura N."/>
            <person name="Kikuchi H."/>
            <person name="Masuho Y."/>
            <person name="Yamashita R."/>
            <person name="Nakai K."/>
            <person name="Yada T."/>
            <person name="Nakamura Y."/>
            <person name="Ohara O."/>
            <person name="Isogai T."/>
            <person name="Sugano S."/>
        </authorList>
    </citation>
    <scope>NUCLEOTIDE SEQUENCE [LARGE SCALE MRNA] OF 759-1527 (ISOFORM 1)</scope>
</reference>
<reference key="8">
    <citation type="journal article" date="2005" name="Mol. Cell. Biol.">
        <title>The carboxy-terminal Neh3 domain of Nrf2 is required for transcriptional activation.</title>
        <authorList>
            <person name="Nioi P."/>
            <person name="Nguyen T."/>
            <person name="Sherratt P.J."/>
            <person name="Pickett C.B."/>
        </authorList>
    </citation>
    <scope>FUNCTION IN TRANSCRIPTION</scope>
    <scope>INTERACTION WITH NFE2L2</scope>
</reference>
<reference key="9">
    <citation type="journal article" date="2006" name="FEBS Lett.">
        <title>CHD6 is a DNA-dependent ATPase and localizes at nuclear sites of mRNA synthesis.</title>
        <authorList>
            <person name="Lutz T."/>
            <person name="Stoger R."/>
            <person name="Nieto A."/>
        </authorList>
    </citation>
    <scope>CATALYTIC ACTIVITY</scope>
    <scope>SUBCELLULAR LOCATION</scope>
    <scope>REGION</scope>
</reference>
<reference key="10">
    <citation type="journal article" date="2008" name="Am. J. Med. Genet. A">
        <title>Disruption of the TCF4 gene in a girl with mental retardation but without the classical Pitt-Hopkins syndrome.</title>
        <authorList>
            <person name="Kalscheuer V.M."/>
            <person name="Feenstra I."/>
            <person name="Van Ravenswaaij-Arts C.M."/>
            <person name="Smeets D.F."/>
            <person name="Menzel C."/>
            <person name="Ullmann R."/>
            <person name="Musante L."/>
            <person name="Ropers H.H."/>
        </authorList>
    </citation>
    <scope>DISEASE</scope>
</reference>
<reference key="11">
    <citation type="journal article" date="2008" name="Proc. Natl. Acad. Sci. U.S.A.">
        <title>A quantitative atlas of mitotic phosphorylation.</title>
        <authorList>
            <person name="Dephoure N."/>
            <person name="Zhou C."/>
            <person name="Villen J."/>
            <person name="Beausoleil S.A."/>
            <person name="Bakalarski C.E."/>
            <person name="Elledge S.J."/>
            <person name="Gygi S.P."/>
        </authorList>
    </citation>
    <scope>IDENTIFICATION BY MASS SPECTROMETRY [LARGE SCALE ANALYSIS]</scope>
    <source>
        <tissue>Cervix carcinoma</tissue>
    </source>
</reference>
<reference key="12">
    <citation type="journal article" date="2010" name="J. Virol.">
        <title>Interaction of the papillomavirus E8--E2C protein with the cellular CHD6 protein contributes to transcriptional repression.</title>
        <authorList>
            <person name="Fertey J."/>
            <person name="Ammermann I."/>
            <person name="Winkler M."/>
            <person name="Stoeger R."/>
            <person name="Iftner T."/>
            <person name="Stubenrauch F."/>
        </authorList>
    </citation>
    <scope>FUNCTION (MICROBIAL INFECTION)</scope>
    <scope>INTERACTION WITH HUMAN PAPILLOMAVIRUS PROTEIN E8^E2C</scope>
</reference>
<reference key="13">
    <citation type="journal article" date="2011" name="Cell. Microbiol.">
        <title>CHD6 chromatin remodeler is a negative modulator of influenza virus replication that relocates to inactive chromatin upon infection.</title>
        <authorList>
            <person name="Alfonso R."/>
            <person name="Lutz T."/>
            <person name="Rodriguez A."/>
            <person name="Chavez J.P."/>
            <person name="Rodriguez P."/>
            <person name="Gutierrez S."/>
            <person name="Nieto A."/>
        </authorList>
    </citation>
    <scope>SUBCELLULAR LOCATION</scope>
    <scope>INTERACTION WITH INFLUENZA A POLYMERASE COMPLEX (MICROBIAL INFECTION)</scope>
    <scope>FUNCTION (MICROBIAL INFECTION)</scope>
</reference>
<reference key="14">
    <citation type="journal article" date="2013" name="J. Virol.">
        <title>CHD6, a cellular repressor of influenza virus replication, is degraded in human alveolar epithelial cells and mice lungs during infection.</title>
        <authorList>
            <person name="Alfonso R."/>
            <person name="Rodriguez A."/>
            <person name="Rodriguez P."/>
            <person name="Lutz T."/>
            <person name="Nieto A."/>
        </authorList>
    </citation>
    <scope>FUNCTION (MICROBIAL INFECTION)</scope>
</reference>
<reference key="15">
    <citation type="journal article" date="2017" name="J. Biol. Chem.">
        <title>The ATP-dependent Chromatin Remodeling Enzymes CHD6, CHD7, and CHD8 Exhibit Distinct Nucleosome Binding and Remodeling Activities.</title>
        <authorList>
            <person name="Manning B.J."/>
            <person name="Yusufzai T."/>
        </authorList>
    </citation>
    <scope>FUNCTION AS AN ATPASE</scope>
    <scope>CATALYTIC ACTIVITY</scope>
    <scope>BIOPHYSICOCHEMICAL PROPERTIES</scope>
    <scope>DNA-BINDING</scope>
</reference>
<reference key="16">
    <citation type="submission" date="2007-10" db="PDB data bank">
        <title>Solution structure of chromo domain 2 in chromodomain-helicase-DNA-binding protein 6.</title>
        <authorList>
            <consortium name="RIKEN structural genomics initiative (RSGI)"/>
        </authorList>
    </citation>
    <scope>STRUCTURE BY NMR OF 371-431</scope>
</reference>
<organism>
    <name type="scientific">Homo sapiens</name>
    <name type="common">Human</name>
    <dbReference type="NCBI Taxonomy" id="9606"/>
    <lineage>
        <taxon>Eukaryota</taxon>
        <taxon>Metazoa</taxon>
        <taxon>Chordata</taxon>
        <taxon>Craniata</taxon>
        <taxon>Vertebrata</taxon>
        <taxon>Euteleostomi</taxon>
        <taxon>Mammalia</taxon>
        <taxon>Eutheria</taxon>
        <taxon>Euarchontoglires</taxon>
        <taxon>Primates</taxon>
        <taxon>Haplorrhini</taxon>
        <taxon>Catarrhini</taxon>
        <taxon>Hominidae</taxon>
        <taxon>Homo</taxon>
    </lineage>
</organism>
<accession>Q8TD26</accession>
<accession>Q5JYQ0</accession>
<accession>Q5TGZ9</accession>
<accession>Q5TH00</accession>
<accession>Q5TH01</accession>
<accession>Q8IZR2</accession>
<accession>Q8WTY0</accession>
<accession>Q9H4H6</accession>
<accession>Q9H6D4</accession>
<accession>Q9NTT7</accession>
<accession>Q9P2L1</accession>
<evidence type="ECO:0000255" key="1">
    <source>
        <dbReference type="PROSITE-ProRule" id="PRU00053"/>
    </source>
</evidence>
<evidence type="ECO:0000255" key="2">
    <source>
        <dbReference type="PROSITE-ProRule" id="PRU00541"/>
    </source>
</evidence>
<evidence type="ECO:0000255" key="3">
    <source>
        <dbReference type="PROSITE-ProRule" id="PRU00542"/>
    </source>
</evidence>
<evidence type="ECO:0000256" key="4">
    <source>
        <dbReference type="SAM" id="MobiDB-lite"/>
    </source>
</evidence>
<evidence type="ECO:0000269" key="5">
    <source>
    </source>
</evidence>
<evidence type="ECO:0000269" key="6">
    <source>
    </source>
</evidence>
<evidence type="ECO:0000269" key="7">
    <source>
    </source>
</evidence>
<evidence type="ECO:0000269" key="8">
    <source>
    </source>
</evidence>
<evidence type="ECO:0000269" key="9">
    <source>
    </source>
</evidence>
<evidence type="ECO:0000269" key="10">
    <source>
    </source>
</evidence>
<evidence type="ECO:0000269" key="11">
    <source>
    </source>
</evidence>
<evidence type="ECO:0000303" key="12">
    <source>
    </source>
</evidence>
<evidence type="ECO:0000303" key="13">
    <source ref="4"/>
</evidence>
<evidence type="ECO:0000305" key="14"/>
<evidence type="ECO:0007829" key="15">
    <source>
        <dbReference type="PDB" id="2EPB"/>
    </source>
</evidence>
<keyword id="KW-0002">3D-structure</keyword>
<keyword id="KW-0025">Alternative splicing</keyword>
<keyword id="KW-0067">ATP-binding</keyword>
<keyword id="KW-0156">Chromatin regulator</keyword>
<keyword id="KW-0238">DNA-binding</keyword>
<keyword id="KW-0945">Host-virus interaction</keyword>
<keyword id="KW-0378">Hydrolase</keyword>
<keyword id="KW-0547">Nucleotide-binding</keyword>
<keyword id="KW-0539">Nucleus</keyword>
<keyword id="KW-1267">Proteomics identification</keyword>
<keyword id="KW-1185">Reference proteome</keyword>
<keyword id="KW-0677">Repeat</keyword>
<keyword id="KW-0804">Transcription</keyword>
<keyword id="KW-0805">Transcription regulation</keyword>
<comment type="function">
    <text evidence="5 6 11">ATP-dependent chromatin-remodeling factor (PubMed:17027977, PubMed:28533432). Regulates transcription by disrupting nucleosomes in a largely non-sliding manner which strongly increases the accessibility of chromatin; nucleosome disruption requires ATP (PubMed:28533432). Activates transcription of specific genes in response to oxidative stress through interaction with NFE2L2.</text>
</comment>
<comment type="function">
    <text evidence="8 9 10">(Microbial infection) Acts as a transcriptional repressor of different viruses including influenza virus or papillomavirus. During influenza virus infection, the viral polymerase complex localizes CHD6 to inactive chromatin where it gets degraded in a proteasome independent-manner.</text>
</comment>
<comment type="catalytic activity">
    <reaction evidence="6 11">
        <text>ATP + H2O = ADP + phosphate + H(+)</text>
        <dbReference type="Rhea" id="RHEA:13065"/>
        <dbReference type="ChEBI" id="CHEBI:15377"/>
        <dbReference type="ChEBI" id="CHEBI:15378"/>
        <dbReference type="ChEBI" id="CHEBI:30616"/>
        <dbReference type="ChEBI" id="CHEBI:43474"/>
        <dbReference type="ChEBI" id="CHEBI:456216"/>
    </reaction>
</comment>
<comment type="biophysicochemical properties">
    <kinetics>
        <KM evidence="11">6.1 nM for ATP</KM>
    </kinetics>
</comment>
<comment type="subunit">
    <text evidence="5">Interacts with NFE2L2; involved in activation of the transcription.</text>
</comment>
<comment type="subunit">
    <text evidence="9">(Microbial infection) Interacts with the influenza A polymerase complex composed fo PB1, PB2 and PA.</text>
</comment>
<comment type="subunit">
    <text evidence="8">(Microbial infection) Interacts (via N-terminus) with human papillomavirus protein E8^E2C (via C-terminus); this interaction induces transcriptional repression of the viral genome.</text>
</comment>
<comment type="subcellular location">
    <subcellularLocation>
        <location evidence="6 9">Nucleus</location>
        <location evidence="6 9">Nucleoplasm</location>
    </subcellularLocation>
    <text evidence="6 9">Enriched at sites of mRNA synthesis (PubMed:17027977). During influenza A virus infection, localizes to inactive chromatin.</text>
</comment>
<comment type="alternative products">
    <event type="alternative splicing"/>
    <isoform>
        <id>Q8TD26-1</id>
        <name>1</name>
        <sequence type="displayed"/>
    </isoform>
    <isoform>
        <id>Q8TD26-2</id>
        <name>2</name>
        <sequence type="described" ref="VSP_015296 VSP_015297 VSP_015298"/>
    </isoform>
    <isoform>
        <id>Q8TD26-3</id>
        <name>3</name>
        <sequence type="described" ref="VSP_015299 VSP_015300 VSP_015301"/>
    </isoform>
</comment>
<comment type="tissue specificity">
    <text>Widely expressed.</text>
</comment>
<comment type="disease">
    <text evidence="7">A chromosomal aberration disrupting CHD6 has been found in a patient with mild to moderate intellectual disability and minor facial anomalies. Translocation t(18;20)(q21.1;q11.2) with TCF4 producing a CHD6-TCF4 fusion transcript (PubMed:18627065).</text>
</comment>
<comment type="similarity">
    <text evidence="14">Belongs to the SNF2/RAD54 helicase family.</text>
</comment>
<comment type="sequence caution" evidence="14">
    <conflict type="erroneous initiation">
        <sequence resource="EMBL-CDS" id="AAK56405"/>
    </conflict>
    <text>Truncated N-terminus.</text>
</comment>
<comment type="sequence caution" evidence="14">
    <conflict type="erroneous initiation">
        <sequence resource="EMBL-CDS" id="AAN59903"/>
    </conflict>
    <text>Truncated N-terminus.</text>
</comment>
<comment type="sequence caution" evidence="14">
    <conflict type="miscellaneous discrepancy">
        <sequence resource="EMBL-CDS" id="BAB15325"/>
    </conflict>
    <text>The sequence differs from position 1528 onward for unknown reasons.</text>
</comment>
<proteinExistence type="evidence at protein level"/>
<feature type="chain" id="PRO_0000080231" description="Chromodomain-helicase-DNA-binding protein 6">
    <location>
        <begin position="1"/>
        <end position="2715"/>
    </location>
</feature>
<feature type="domain" description="Chromo 1" evidence="1">
    <location>
        <begin position="292"/>
        <end position="343"/>
    </location>
</feature>
<feature type="domain" description="Chromo 2" evidence="1">
    <location>
        <begin position="375"/>
        <end position="439"/>
    </location>
</feature>
<feature type="domain" description="Helicase ATP-binding" evidence="2">
    <location>
        <begin position="473"/>
        <end position="647"/>
    </location>
</feature>
<feature type="domain" description="Helicase C-terminal" evidence="3">
    <location>
        <begin position="787"/>
        <end position="956"/>
    </location>
</feature>
<feature type="domain" description="Myb-like">
    <location>
        <begin position="1449"/>
        <end position="1503"/>
    </location>
</feature>
<feature type="region of interest" description="Required for DNA-dependent ATPase activity">
    <location>
        <begin position="1"/>
        <end position="747"/>
    </location>
</feature>
<feature type="region of interest" description="Disordered" evidence="4">
    <location>
        <begin position="1"/>
        <end position="30"/>
    </location>
</feature>
<feature type="region of interest" description="Disordered" evidence="4">
    <location>
        <begin position="66"/>
        <end position="244"/>
    </location>
</feature>
<feature type="region of interest" description="Disordered" evidence="4">
    <location>
        <begin position="1318"/>
        <end position="1390"/>
    </location>
</feature>
<feature type="region of interest" description="Disordered" evidence="4">
    <location>
        <begin position="2027"/>
        <end position="2063"/>
    </location>
</feature>
<feature type="region of interest" description="Disordered" evidence="4">
    <location>
        <begin position="2116"/>
        <end position="2148"/>
    </location>
</feature>
<feature type="region of interest" description="Disordered" evidence="4">
    <location>
        <begin position="2321"/>
        <end position="2351"/>
    </location>
</feature>
<feature type="region of interest" description="Disordered" evidence="4">
    <location>
        <begin position="2373"/>
        <end position="2422"/>
    </location>
</feature>
<feature type="region of interest" description="Disordered" evidence="4">
    <location>
        <begin position="2547"/>
        <end position="2602"/>
    </location>
</feature>
<feature type="region of interest" description="Disordered" evidence="4">
    <location>
        <begin position="2648"/>
        <end position="2715"/>
    </location>
</feature>
<feature type="short sequence motif" description="DEAH box">
    <location>
        <begin position="598"/>
        <end position="601"/>
    </location>
</feature>
<feature type="compositionally biased region" description="Basic and acidic residues" evidence="4">
    <location>
        <begin position="1"/>
        <end position="11"/>
    </location>
</feature>
<feature type="compositionally biased region" description="Polar residues" evidence="4">
    <location>
        <begin position="12"/>
        <end position="27"/>
    </location>
</feature>
<feature type="compositionally biased region" description="Basic and acidic residues" evidence="4">
    <location>
        <begin position="123"/>
        <end position="172"/>
    </location>
</feature>
<feature type="compositionally biased region" description="Polar residues" evidence="4">
    <location>
        <begin position="1321"/>
        <end position="1330"/>
    </location>
</feature>
<feature type="compositionally biased region" description="Basic and acidic residues" evidence="4">
    <location>
        <begin position="1333"/>
        <end position="1351"/>
    </location>
</feature>
<feature type="compositionally biased region" description="Basic and acidic residues" evidence="4">
    <location>
        <begin position="1367"/>
        <end position="1376"/>
    </location>
</feature>
<feature type="compositionally biased region" description="Basic and acidic residues" evidence="4">
    <location>
        <begin position="2027"/>
        <end position="2038"/>
    </location>
</feature>
<feature type="compositionally biased region" description="Polar residues" evidence="4">
    <location>
        <begin position="2116"/>
        <end position="2141"/>
    </location>
</feature>
<feature type="compositionally biased region" description="Low complexity" evidence="4">
    <location>
        <begin position="2329"/>
        <end position="2346"/>
    </location>
</feature>
<feature type="compositionally biased region" description="Low complexity" evidence="4">
    <location>
        <begin position="2547"/>
        <end position="2560"/>
    </location>
</feature>
<feature type="compositionally biased region" description="Basic and acidic residues" evidence="4">
    <location>
        <begin position="2567"/>
        <end position="2588"/>
    </location>
</feature>
<feature type="compositionally biased region" description="Basic and acidic residues" evidence="4">
    <location>
        <begin position="2706"/>
        <end position="2715"/>
    </location>
</feature>
<feature type="binding site" evidence="2">
    <location>
        <begin position="486"/>
        <end position="493"/>
    </location>
    <ligand>
        <name>ATP</name>
        <dbReference type="ChEBI" id="CHEBI:30616"/>
    </ligand>
</feature>
<feature type="splice variant" id="VSP_015296" description="In isoform 2." evidence="12">
    <original>MKMKIQKKEK</original>
    <variation>MCQSHMIGFCTSSVNEETETQGDQISCPNPTTLVFRTQISSLPSL</variation>
    <location>
        <begin position="1"/>
        <end position="10"/>
    </location>
</feature>
<feature type="splice variant" id="VSP_015297" description="In isoform 2." evidence="12">
    <original>FSYLHCKWATMEEL</original>
    <variation>LYVYLKYSLYLGFI</variation>
    <location>
        <begin position="325"/>
        <end position="338"/>
    </location>
</feature>
<feature type="splice variant" id="VSP_015298" description="In isoform 2." evidence="12">
    <location>
        <begin position="339"/>
        <end position="2715"/>
    </location>
</feature>
<feature type="splice variant" id="VSP_015299" description="In isoform 3." evidence="13">
    <location>
        <begin position="592"/>
        <end position="1108"/>
    </location>
</feature>
<feature type="splice variant" id="VSP_015300" description="In isoform 3." evidence="13">
    <original>GNT</original>
    <variation>QHR</variation>
    <location>
        <begin position="1337"/>
        <end position="1339"/>
    </location>
</feature>
<feature type="splice variant" id="VSP_015301" description="In isoform 3." evidence="13">
    <location>
        <begin position="1340"/>
        <end position="2715"/>
    </location>
</feature>
<feature type="sequence variant" id="VAR_059213" description="In dbSNP:rs4474937.">
    <original>Q</original>
    <variation>H</variation>
    <location>
        <position position="780"/>
    </location>
</feature>
<feature type="sequence variant" id="VAR_023363" description="In dbSNP:rs3817893.">
    <original>H</original>
    <variation>Q</variation>
    <location>
        <position position="2161"/>
    </location>
</feature>
<feature type="sequence conflict" description="In Ref. 1; AAK56405." evidence="14" ref="1">
    <original>K</original>
    <variation>E</variation>
    <location>
        <position position="134"/>
    </location>
</feature>
<feature type="sequence conflict" description="In Ref. 4; AAN59903." evidence="14" ref="4">
    <original>T</original>
    <variation>A</variation>
    <location>
        <position position="575"/>
    </location>
</feature>
<feature type="sequence conflict" description="In Ref. 1; AAK56405." evidence="14" ref="1">
    <original>E</original>
    <variation>K</variation>
    <location>
        <position position="1031"/>
    </location>
</feature>
<feature type="sequence conflict" description="In Ref. 3; AAH21907." evidence="14" ref="3">
    <original>RGRRPR</original>
    <variation>EIVGLE</variation>
    <location>
        <begin position="2442"/>
        <end position="2447"/>
    </location>
</feature>
<feature type="sequence conflict" description="In Ref. 1; AAK56405." evidence="14" ref="1">
    <original>D</original>
    <variation>G</variation>
    <location>
        <position position="2663"/>
    </location>
</feature>
<feature type="strand" evidence="15">
    <location>
        <begin position="379"/>
        <end position="387"/>
    </location>
</feature>
<feature type="strand" evidence="15">
    <location>
        <begin position="389"/>
        <end position="391"/>
    </location>
</feature>
<feature type="strand" evidence="15">
    <location>
        <begin position="394"/>
        <end position="401"/>
    </location>
</feature>
<feature type="helix" evidence="15">
    <location>
        <begin position="407"/>
        <end position="409"/>
    </location>
</feature>
<feature type="strand" evidence="15">
    <location>
        <begin position="412"/>
        <end position="414"/>
    </location>
</feature>
<feature type="turn" evidence="15">
    <location>
        <begin position="415"/>
        <end position="417"/>
    </location>
</feature>
<feature type="helix" evidence="15">
    <location>
        <begin position="420"/>
        <end position="429"/>
    </location>
</feature>
<sequence>MKMKIQKKEKQLSNLKVLNHSPMSDASVNFDYKSPSPFDCSTDQEEKIEDVASHCLPQKDLYTAEEEAATLFPRKMTSHNGMEDSGGGGTGVKKKRKKKEPGDQEGAAKGSKDREPKPKRKREPKEPKEPRKAKEPKKAKEHKEPKQKDGAKKARKPREASGTKEAKEKRSCTDSAARTKSRKASKEQGPTPVEKKKKGKRKSETTVESLELDQGLTNPSLRSPEESTESTDSQKRRSGRQVKRRKYNEDLDFKVVDDDGETIAVLGAGRTSALSASTLAWQAEEPPEDDANIIEKILASKTVQEVHPGEPPFDLELFYVKYRNFSYLHCKWATMEELEKDPRIAQKIKRFRNKQAQMKHIFTEPDEDLFNPDYVEVDRILEVAHTKDAETGEEVTHYLVKWCSLPYEESTWELEEDVDPAKVKEFESLQVLPEIKHVERPASDSWQKLEKSREYKNSNQLREYQLEGMNWLLFNWYNRKNCILADEMGLGKTIQSITFLSEIFLRGIHGPFLIIAPLSTITNWEREFRTWTEMNAIVYHGSQISRQMIQQYEMVYRDAQGNPLSGVFKFHVVITTFEMILADCPELKKIHWSCVIIDEAHRLKNRNCKLLEGLKLMALEHKVLLTGTPLQNSVEELFSLLNFLEPSQFPSETAFLEEFGDLKTEEQVKKLQSILKPMMLRRLKDDVEKNLAPKQETIIEVELTNIQKKYYRAILEKNFSFLTKGANQHNMPNLINTMMELRKCCNHPYLINGAEEKILEDFRKTHSPDAPDFQLQAMIQAAGKLVLIDKLLPKLIAGGHKVLIFSQMVRCLDILEDYLIQRRYTYERIDGRVRGNLRQAAIDRFCKPDSDRFVFLLCTRAGGLGINLTAADTCIIFDSDWNPQNDLQAQARCHRIGQSKAVKVYRLITRNSYEREMFDKASLKLGLDKAVLQDINRKGGTNGVQQLSKMEVEDLLRKGAYGALMDEEDEGSKFCEEDIDQILQRRTHTITIQSEGKGSTFAKASFVASGNRTDISLDDPNFWQKWAKIAELDTEAKNEKESLVIDRPRVRKQTKHYNSFEEDELMEFSELDSDSDERPTRSRRLNDKARRYLRAECFRVEKNLLIFGWGRWKDILTHGRFKWHLNEKDMEMICRALLVYCVKHYKGDEKIKSFIWELITPTKDGQAQTLQNHSGLSAPVPRGRKGKKTKNQLLIPELKDADWLATCNPEVVLHDDGYKKHLKQHCNKVLLRVRMLYYLKAEILGEAAEKAFEGSPARELDVPLPDIDYMEIPVDWWDAEADKSLLIGVFKHGYERYNAMRADPALCFLEKVGMPDEKSLSAEQGVTDGTSDIPERGNTDKEDNAEDKVDGLQKQTESSSDGGDGVFSEKKDDSRAAQDGSDPDKSPWPVSSALTARLRRLVTVYQRCNRKELCRPEILGPGNQGYWVQEEMFRRTSEMDLINKEAQKRWTRREQADFYRTVSSFGVVYDQEKKTFDWTQFRIISRLDKKSDESLEQYFYSFVAMCRNVCRLPTWKDGGPPDTTIYVEPITEERAARTLYRIELLRKVREQVLKCPQLHERLQLCRPSLYLPVWWECGKHDRDLLIGTAKHGLNRTDCYIMNDPQLSFLDAYRNYAQHKRSGTQAPGNLCCLYQTNSKLYESLTYSQMSRTSESLENEPENLVRVESRDDHLSLPDVTCENFISKVQDVISINHDESLLPESLESMMYGKKVLSQEPSSFQESPSTNTESRKDVITISISKDGNCQSGGPEAEIASGPTFMGSLEAGGVAQANIKNGKHLLMSISKEGELCCSEAGQRPENIGQLEAKCLASPSLNPGNESGFVDMCSLSVCDSKRNLSSDQQLIDLLENKSLESKLILSQNHSDEEEEEEENEEENLAMAVGMGERPEVLHLTEPTTNISREKNQGFQDETKKGSLEVANQTPGLQRAFPAPAACQCHCKHMERWMHGLENDEFEIEKPKAYIPDLFKSKTNTIAMEGEPTAIPSQPFKVKHELLKEPWKESAEGQNVFPTYPLEGSELKSEDMDFENKDDYDRDGNCHSQDYPGKYSEEESKSSTSGITGDIGDELQEARAPTIAQLLQEKTLYSFSEWPKDRVIINRLDNICHVVLKGKWPSSQQYEPSGTLPTPVLTSSAGSRTSLSEPEAAEHSFSNGAALAAQIHKESFLAPVFTKDEQKHRRPYEFEVERDAKARGLEQFSATHGHTPIILNGWHGESAMDLSCSSEGSPGATSPFPVSASTPKIGAISSLQGALGMDLSGILQAGLIHPVTGQIVNGSLRRDDAATRRRRGRRKHVEGGMDLIFLKEQTLQAGILEVHEDPGQATLSTTHPEGPGPATSAPEPATAASSQAEKSIPSKSLLDWLRQQADYSLEVPGFGANFSDKPKQRRPRCKEPGKLDVSSLSGEERVPAIPKEPGLRGFLPENKFNHTLAEPILRDTGPRRRGRRPRSELLKAPSIVADSPSGMGPLFMNGLIAGMDLVGLQNMRNMPGIPLTGLVGFPAGFATMPTGEEVKSTLSMLPMMLPGMAAVPQMFGVGGLLSPPMATTCTSTAPASLSSTTKSGTAVTEKTAEDKPSSHDVKTDTLAEDKPGPGPFSDQSEPAITTSSPVAFNPFLIPGVSPGLIYPSMFLSPGMGMALPAMQQARHSEIVGLESQKRKKKKTKGDNPNSHPEPAPSCEREPSGDENCAEPSAPLPAEREHGAQAGEGALKDSNNDTN</sequence>
<dbReference type="EC" id="3.6.4.-" evidence="6 11"/>
<dbReference type="EMBL" id="AY034072">
    <property type="protein sequence ID" value="AAK56405.1"/>
    <property type="status" value="ALT_INIT"/>
    <property type="molecule type" value="mRNA"/>
</dbReference>
<dbReference type="EMBL" id="AL031667">
    <property type="status" value="NOT_ANNOTATED_CDS"/>
    <property type="molecule type" value="Genomic_DNA"/>
</dbReference>
<dbReference type="EMBL" id="AL031669">
    <property type="status" value="NOT_ANNOTATED_CDS"/>
    <property type="molecule type" value="Genomic_DNA"/>
</dbReference>
<dbReference type="EMBL" id="AL121674">
    <property type="status" value="NOT_ANNOTATED_CDS"/>
    <property type="molecule type" value="Genomic_DNA"/>
</dbReference>
<dbReference type="EMBL" id="BC021907">
    <property type="protein sequence ID" value="AAH21907.1"/>
    <property type="molecule type" value="mRNA"/>
</dbReference>
<dbReference type="EMBL" id="BC039860">
    <property type="status" value="NOT_ANNOTATED_CDS"/>
    <property type="molecule type" value="mRNA"/>
</dbReference>
<dbReference type="EMBL" id="BC040016">
    <property type="status" value="NOT_ANNOTATED_CDS"/>
    <property type="molecule type" value="mRNA"/>
</dbReference>
<dbReference type="EMBL" id="AF525085">
    <property type="protein sequence ID" value="AAN59903.1"/>
    <property type="status" value="ALT_INIT"/>
    <property type="molecule type" value="mRNA"/>
</dbReference>
<dbReference type="EMBL" id="AB037756">
    <property type="protein sequence ID" value="BAA92573.2"/>
    <property type="molecule type" value="mRNA"/>
</dbReference>
<dbReference type="EMBL" id="AK026022">
    <property type="protein sequence ID" value="BAB15325.1"/>
    <property type="status" value="ALT_SEQ"/>
    <property type="molecule type" value="mRNA"/>
</dbReference>
<dbReference type="CCDS" id="CCDS13317.1">
    <molecule id="Q8TD26-1"/>
</dbReference>
<dbReference type="RefSeq" id="NP_115597.3">
    <molecule id="Q8TD26-1"/>
    <property type="nucleotide sequence ID" value="NM_032221.4"/>
</dbReference>
<dbReference type="RefSeq" id="XP_047296501.1">
    <molecule id="Q8TD26-1"/>
    <property type="nucleotide sequence ID" value="XM_047440545.1"/>
</dbReference>
<dbReference type="RefSeq" id="XP_047296502.1">
    <molecule id="Q8TD26-1"/>
    <property type="nucleotide sequence ID" value="XM_047440546.1"/>
</dbReference>
<dbReference type="RefSeq" id="XP_047296503.1">
    <molecule id="Q8TD26-1"/>
    <property type="nucleotide sequence ID" value="XM_047440547.1"/>
</dbReference>
<dbReference type="RefSeq" id="XP_047296504.1">
    <molecule id="Q8TD26-1"/>
    <property type="nucleotide sequence ID" value="XM_047440548.1"/>
</dbReference>
<dbReference type="RefSeq" id="XP_047296505.1">
    <molecule id="Q8TD26-1"/>
    <property type="nucleotide sequence ID" value="XM_047440549.1"/>
</dbReference>
<dbReference type="RefSeq" id="XP_054180094.1">
    <molecule id="Q8TD26-1"/>
    <property type="nucleotide sequence ID" value="XM_054324119.1"/>
</dbReference>
<dbReference type="RefSeq" id="XP_054180095.1">
    <molecule id="Q8TD26-1"/>
    <property type="nucleotide sequence ID" value="XM_054324120.1"/>
</dbReference>
<dbReference type="RefSeq" id="XP_054180096.1">
    <molecule id="Q8TD26-1"/>
    <property type="nucleotide sequence ID" value="XM_054324121.1"/>
</dbReference>
<dbReference type="RefSeq" id="XP_054180097.1">
    <molecule id="Q8TD26-1"/>
    <property type="nucleotide sequence ID" value="XM_054324122.1"/>
</dbReference>
<dbReference type="RefSeq" id="XP_054180098.1">
    <molecule id="Q8TD26-1"/>
    <property type="nucleotide sequence ID" value="XM_054324123.1"/>
</dbReference>
<dbReference type="RefSeq" id="XP_054180099.1">
    <molecule id="Q8TD26-1"/>
    <property type="nucleotide sequence ID" value="XM_054324124.1"/>
</dbReference>
<dbReference type="RefSeq" id="XP_054180100.1">
    <molecule id="Q8TD26-1"/>
    <property type="nucleotide sequence ID" value="XM_054324125.1"/>
</dbReference>
<dbReference type="RefSeq" id="XP_054180101.1">
    <molecule id="Q8TD26-1"/>
    <property type="nucleotide sequence ID" value="XM_054324126.1"/>
</dbReference>
<dbReference type="PDB" id="2EPB">
    <property type="method" value="NMR"/>
    <property type="chains" value="A=371-431"/>
</dbReference>
<dbReference type="PDBsum" id="2EPB"/>
<dbReference type="BMRB" id="Q8TD26"/>
<dbReference type="SMR" id="Q8TD26"/>
<dbReference type="BioGRID" id="123931">
    <property type="interactions" value="75"/>
</dbReference>
<dbReference type="FunCoup" id="Q8TD26">
    <property type="interactions" value="3685"/>
</dbReference>
<dbReference type="IntAct" id="Q8TD26">
    <property type="interactions" value="39"/>
</dbReference>
<dbReference type="MINT" id="Q8TD26"/>
<dbReference type="STRING" id="9606.ENSP00000362330"/>
<dbReference type="CarbonylDB" id="Q8TD26"/>
<dbReference type="GlyGen" id="Q8TD26">
    <property type="glycosylation" value="4 sites, 1 O-linked glycan (3 sites)"/>
</dbReference>
<dbReference type="iPTMnet" id="Q8TD26"/>
<dbReference type="MetOSite" id="Q8TD26"/>
<dbReference type="PhosphoSitePlus" id="Q8TD26"/>
<dbReference type="BioMuta" id="CHD6"/>
<dbReference type="DMDM" id="296439466"/>
<dbReference type="jPOST" id="Q8TD26"/>
<dbReference type="MassIVE" id="Q8TD26"/>
<dbReference type="PaxDb" id="9606-ENSP00000362330"/>
<dbReference type="PeptideAtlas" id="Q8TD26"/>
<dbReference type="ProteomicsDB" id="74223">
    <molecule id="Q8TD26-1"/>
</dbReference>
<dbReference type="ProteomicsDB" id="74224">
    <molecule id="Q8TD26-2"/>
</dbReference>
<dbReference type="ProteomicsDB" id="74225">
    <molecule id="Q8TD26-3"/>
</dbReference>
<dbReference type="Pumba" id="Q8TD26"/>
<dbReference type="Antibodypedia" id="27058">
    <property type="antibodies" value="47 antibodies from 14 providers"/>
</dbReference>
<dbReference type="DNASU" id="84181"/>
<dbReference type="Ensembl" id="ENST00000373222.3">
    <molecule id="Q8TD26-2"/>
    <property type="protein sequence ID" value="ENSP00000362319.3"/>
    <property type="gene ID" value="ENSG00000124177.16"/>
</dbReference>
<dbReference type="Ensembl" id="ENST00000373233.8">
    <molecule id="Q8TD26-1"/>
    <property type="protein sequence ID" value="ENSP00000362330.3"/>
    <property type="gene ID" value="ENSG00000124177.16"/>
</dbReference>
<dbReference type="GeneID" id="84181"/>
<dbReference type="KEGG" id="hsa:84181"/>
<dbReference type="MANE-Select" id="ENST00000373233.8">
    <property type="protein sequence ID" value="ENSP00000362330.3"/>
    <property type="RefSeq nucleotide sequence ID" value="NM_032221.5"/>
    <property type="RefSeq protein sequence ID" value="NP_115597.3"/>
</dbReference>
<dbReference type="UCSC" id="uc002xka.3">
    <molecule id="Q8TD26-1"/>
    <property type="organism name" value="human"/>
</dbReference>
<dbReference type="AGR" id="HGNC:19057"/>
<dbReference type="CTD" id="84181"/>
<dbReference type="DisGeNET" id="84181"/>
<dbReference type="GeneCards" id="CHD6"/>
<dbReference type="HGNC" id="HGNC:19057">
    <property type="gene designation" value="CHD6"/>
</dbReference>
<dbReference type="HPA" id="ENSG00000124177">
    <property type="expression patterns" value="Low tissue specificity"/>
</dbReference>
<dbReference type="MalaCards" id="CHD6"/>
<dbReference type="MIM" id="616114">
    <property type="type" value="gene"/>
</dbReference>
<dbReference type="neXtProt" id="NX_Q8TD26"/>
<dbReference type="OpenTargets" id="ENSG00000124177"/>
<dbReference type="Orphanet" id="2108">
    <property type="disease" value="Hallermann-Streiff syndrome"/>
</dbReference>
<dbReference type="PharmGKB" id="PA134974700"/>
<dbReference type="VEuPathDB" id="HostDB:ENSG00000124177"/>
<dbReference type="eggNOG" id="KOG0384">
    <property type="taxonomic scope" value="Eukaryota"/>
</dbReference>
<dbReference type="GeneTree" id="ENSGT00940000158986"/>
<dbReference type="HOGENOM" id="CLU_000315_5_1_1"/>
<dbReference type="InParanoid" id="Q8TD26"/>
<dbReference type="OMA" id="HMERWTH"/>
<dbReference type="OrthoDB" id="5857104at2759"/>
<dbReference type="PAN-GO" id="Q8TD26">
    <property type="GO annotations" value="9 GO annotations based on evolutionary models"/>
</dbReference>
<dbReference type="PhylomeDB" id="Q8TD26"/>
<dbReference type="TreeFam" id="TF313572"/>
<dbReference type="PathwayCommons" id="Q8TD26"/>
<dbReference type="SignaLink" id="Q8TD26"/>
<dbReference type="BioGRID-ORCS" id="84181">
    <property type="hits" value="16 hits in 1182 CRISPR screens"/>
</dbReference>
<dbReference type="ChiTaRS" id="CHD6">
    <property type="organism name" value="human"/>
</dbReference>
<dbReference type="EvolutionaryTrace" id="Q8TD26"/>
<dbReference type="GenomeRNAi" id="84181"/>
<dbReference type="Pharos" id="Q8TD26">
    <property type="development level" value="Tbio"/>
</dbReference>
<dbReference type="PRO" id="PR:Q8TD26"/>
<dbReference type="Proteomes" id="UP000005640">
    <property type="component" value="Chromosome 20"/>
</dbReference>
<dbReference type="RNAct" id="Q8TD26">
    <property type="molecule type" value="protein"/>
</dbReference>
<dbReference type="Bgee" id="ENSG00000124177">
    <property type="expression patterns" value="Expressed in sural nerve and 189 other cell types or tissues"/>
</dbReference>
<dbReference type="ExpressionAtlas" id="Q8TD26">
    <property type="expression patterns" value="baseline and differential"/>
</dbReference>
<dbReference type="GO" id="GO:0000785">
    <property type="term" value="C:chromatin"/>
    <property type="evidence" value="ECO:0000318"/>
    <property type="project" value="GO_Central"/>
</dbReference>
<dbReference type="GO" id="GO:0005654">
    <property type="term" value="C:nucleoplasm"/>
    <property type="evidence" value="ECO:0000314"/>
    <property type="project" value="HPA"/>
</dbReference>
<dbReference type="GO" id="GO:0005634">
    <property type="term" value="C:nucleus"/>
    <property type="evidence" value="ECO:0000318"/>
    <property type="project" value="GO_Central"/>
</dbReference>
<dbReference type="GO" id="GO:0005524">
    <property type="term" value="F:ATP binding"/>
    <property type="evidence" value="ECO:0007669"/>
    <property type="project" value="UniProtKB-KW"/>
</dbReference>
<dbReference type="GO" id="GO:0016887">
    <property type="term" value="F:ATP hydrolysis activity"/>
    <property type="evidence" value="ECO:0000318"/>
    <property type="project" value="GO_Central"/>
</dbReference>
<dbReference type="GO" id="GO:0008094">
    <property type="term" value="F:ATP-dependent activity, acting on DNA"/>
    <property type="evidence" value="ECO:0000314"/>
    <property type="project" value="UniProtKB"/>
</dbReference>
<dbReference type="GO" id="GO:0140658">
    <property type="term" value="F:ATP-dependent chromatin remodeler activity"/>
    <property type="evidence" value="ECO:0000318"/>
    <property type="project" value="GO_Central"/>
</dbReference>
<dbReference type="GO" id="GO:0003682">
    <property type="term" value="F:chromatin binding"/>
    <property type="evidence" value="ECO:0000318"/>
    <property type="project" value="GO_Central"/>
</dbReference>
<dbReference type="GO" id="GO:0003677">
    <property type="term" value="F:DNA binding"/>
    <property type="evidence" value="ECO:0000318"/>
    <property type="project" value="GO_Central"/>
</dbReference>
<dbReference type="GO" id="GO:0004386">
    <property type="term" value="F:helicase activity"/>
    <property type="evidence" value="ECO:0007669"/>
    <property type="project" value="UniProtKB-KW"/>
</dbReference>
<dbReference type="GO" id="GO:0042393">
    <property type="term" value="F:histone binding"/>
    <property type="evidence" value="ECO:0000318"/>
    <property type="project" value="GO_Central"/>
</dbReference>
<dbReference type="GO" id="GO:0001221">
    <property type="term" value="F:transcription coregulator binding"/>
    <property type="evidence" value="ECO:0000353"/>
    <property type="project" value="UniProtKB"/>
</dbReference>
<dbReference type="GO" id="GO:0045454">
    <property type="term" value="P:cell redox homeostasis"/>
    <property type="evidence" value="ECO:0000315"/>
    <property type="project" value="UniProtKB"/>
</dbReference>
<dbReference type="GO" id="GO:0006338">
    <property type="term" value="P:chromatin remodeling"/>
    <property type="evidence" value="ECO:0000318"/>
    <property type="project" value="GO_Central"/>
</dbReference>
<dbReference type="GO" id="GO:0045944">
    <property type="term" value="P:positive regulation of transcription by RNA polymerase II"/>
    <property type="evidence" value="ECO:0000315"/>
    <property type="project" value="UniProtKB"/>
</dbReference>
<dbReference type="GO" id="GO:0010468">
    <property type="term" value="P:regulation of gene expression"/>
    <property type="evidence" value="ECO:0000318"/>
    <property type="project" value="GO_Central"/>
</dbReference>
<dbReference type="CDD" id="cd18668">
    <property type="entry name" value="CD1_tandem_CHD5-9_like"/>
    <property type="match status" value="1"/>
</dbReference>
<dbReference type="CDD" id="cd18663">
    <property type="entry name" value="CD2_tandem_CHD5-9_like"/>
    <property type="match status" value="1"/>
</dbReference>
<dbReference type="CDD" id="cd18058">
    <property type="entry name" value="DEXHc_CHD6"/>
    <property type="match status" value="1"/>
</dbReference>
<dbReference type="CDD" id="cd18793">
    <property type="entry name" value="SF2_C_SNF"/>
    <property type="match status" value="1"/>
</dbReference>
<dbReference type="FunFam" id="1.10.10.60:FF:000184">
    <property type="entry name" value="Chromodomain helicase DNA binding protein 6"/>
    <property type="match status" value="1"/>
</dbReference>
<dbReference type="FunFam" id="2.40.50.40:FF:000001">
    <property type="entry name" value="chromodomain-helicase-DNA-binding protein 8 isoform X4"/>
    <property type="match status" value="1"/>
</dbReference>
<dbReference type="FunFam" id="2.40.50.40:FF:000005">
    <property type="entry name" value="chromodomain-helicase-DNA-binding protein 8 isoform X4"/>
    <property type="match status" value="1"/>
</dbReference>
<dbReference type="FunFam" id="3.40.50.10810:FF:000003">
    <property type="entry name" value="chromodomain-helicase-DNA-binding protein 8 isoform X4"/>
    <property type="match status" value="1"/>
</dbReference>
<dbReference type="FunFam" id="3.40.50.300:FF:000015">
    <property type="entry name" value="chromodomain-helicase-DNA-binding protein 9 isoform X1"/>
    <property type="match status" value="1"/>
</dbReference>
<dbReference type="Gene3D" id="2.40.50.40">
    <property type="match status" value="2"/>
</dbReference>
<dbReference type="Gene3D" id="1.10.10.60">
    <property type="entry name" value="Homeodomain-like"/>
    <property type="match status" value="2"/>
</dbReference>
<dbReference type="Gene3D" id="3.40.50.300">
    <property type="entry name" value="P-loop containing nucleotide triphosphate hydrolases"/>
    <property type="match status" value="1"/>
</dbReference>
<dbReference type="Gene3D" id="3.40.50.10810">
    <property type="entry name" value="Tandem AAA-ATPase domain"/>
    <property type="match status" value="1"/>
</dbReference>
<dbReference type="InterPro" id="IPR006576">
    <property type="entry name" value="BRK_domain"/>
</dbReference>
<dbReference type="InterPro" id="IPR037259">
    <property type="entry name" value="BRK_sf"/>
</dbReference>
<dbReference type="InterPro" id="IPR051493">
    <property type="entry name" value="CHD"/>
</dbReference>
<dbReference type="InterPro" id="IPR016197">
    <property type="entry name" value="Chromo-like_dom_sf"/>
</dbReference>
<dbReference type="InterPro" id="IPR000953">
    <property type="entry name" value="Chromo/chromo_shadow_dom"/>
</dbReference>
<dbReference type="InterPro" id="IPR023780">
    <property type="entry name" value="Chromo_domain"/>
</dbReference>
<dbReference type="InterPro" id="IPR002464">
    <property type="entry name" value="DNA/RNA_helicase_DEAH_CS"/>
</dbReference>
<dbReference type="InterPro" id="IPR014001">
    <property type="entry name" value="Helicase_ATP-bd"/>
</dbReference>
<dbReference type="InterPro" id="IPR001650">
    <property type="entry name" value="Helicase_C-like"/>
</dbReference>
<dbReference type="InterPro" id="IPR056342">
    <property type="entry name" value="HTH_CHD6-9"/>
</dbReference>
<dbReference type="InterPro" id="IPR027417">
    <property type="entry name" value="P-loop_NTPase"/>
</dbReference>
<dbReference type="InterPro" id="IPR038718">
    <property type="entry name" value="SNF2-like_sf"/>
</dbReference>
<dbReference type="InterPro" id="IPR049730">
    <property type="entry name" value="SNF2/RAD54-like_C"/>
</dbReference>
<dbReference type="InterPro" id="IPR000330">
    <property type="entry name" value="SNF2_N"/>
</dbReference>
<dbReference type="PANTHER" id="PTHR46850">
    <property type="entry name" value="CHROMODOMAIN-HELICASE-DNA-BINDING PROTEIN 9"/>
    <property type="match status" value="1"/>
</dbReference>
<dbReference type="PANTHER" id="PTHR46850:SF1">
    <property type="entry name" value="CHROMODOMAIN-HELICASE-DNA-BINDING PROTEIN 9"/>
    <property type="match status" value="1"/>
</dbReference>
<dbReference type="Pfam" id="PF00385">
    <property type="entry name" value="Chromo"/>
    <property type="match status" value="2"/>
</dbReference>
<dbReference type="Pfam" id="PF00271">
    <property type="entry name" value="Helicase_C"/>
    <property type="match status" value="1"/>
</dbReference>
<dbReference type="Pfam" id="PF23078">
    <property type="entry name" value="HTH_CHD6-9"/>
    <property type="match status" value="1"/>
</dbReference>
<dbReference type="Pfam" id="PF00176">
    <property type="entry name" value="SNF2-rel_dom"/>
    <property type="match status" value="1"/>
</dbReference>
<dbReference type="SMART" id="SM00592">
    <property type="entry name" value="BRK"/>
    <property type="match status" value="1"/>
</dbReference>
<dbReference type="SMART" id="SM00298">
    <property type="entry name" value="CHROMO"/>
    <property type="match status" value="2"/>
</dbReference>
<dbReference type="SMART" id="SM00487">
    <property type="entry name" value="DEXDc"/>
    <property type="match status" value="1"/>
</dbReference>
<dbReference type="SMART" id="SM00490">
    <property type="entry name" value="HELICc"/>
    <property type="match status" value="1"/>
</dbReference>
<dbReference type="SUPFAM" id="SSF160481">
    <property type="entry name" value="BRK domain-like"/>
    <property type="match status" value="1"/>
</dbReference>
<dbReference type="SUPFAM" id="SSF54160">
    <property type="entry name" value="Chromo domain-like"/>
    <property type="match status" value="2"/>
</dbReference>
<dbReference type="SUPFAM" id="SSF52540">
    <property type="entry name" value="P-loop containing nucleoside triphosphate hydrolases"/>
    <property type="match status" value="2"/>
</dbReference>
<dbReference type="PROSITE" id="PS50013">
    <property type="entry name" value="CHROMO_2"/>
    <property type="match status" value="1"/>
</dbReference>
<dbReference type="PROSITE" id="PS00690">
    <property type="entry name" value="DEAH_ATP_HELICASE"/>
    <property type="match status" value="1"/>
</dbReference>
<dbReference type="PROSITE" id="PS51192">
    <property type="entry name" value="HELICASE_ATP_BIND_1"/>
    <property type="match status" value="1"/>
</dbReference>
<dbReference type="PROSITE" id="PS51194">
    <property type="entry name" value="HELICASE_CTER"/>
    <property type="match status" value="1"/>
</dbReference>
<protein>
    <recommendedName>
        <fullName>Chromodomain-helicase-DNA-binding protein 6</fullName>
        <shortName>CHD-6</shortName>
        <ecNumber evidence="6 11">3.6.4.-</ecNumber>
    </recommendedName>
    <alternativeName>
        <fullName>ATP-dependent helicase CHD6</fullName>
    </alternativeName>
    <alternativeName>
        <fullName>Radiation-induced gene B protein</fullName>
    </alternativeName>
</protein>
<name>CHD6_HUMAN</name>